<proteinExistence type="evidence at protein level"/>
<organism>
    <name type="scientific">Paracoccus denitrificans</name>
    <dbReference type="NCBI Taxonomy" id="266"/>
    <lineage>
        <taxon>Bacteria</taxon>
        <taxon>Pseudomonadati</taxon>
        <taxon>Pseudomonadota</taxon>
        <taxon>Alphaproteobacteria</taxon>
        <taxon>Rhodobacterales</taxon>
        <taxon>Paracoccaceae</taxon>
        <taxon>Paracoccus</taxon>
    </lineage>
</organism>
<accession>P29922</accession>
<sequence>MMTFAFYLFAISACVAGFMVVIGRNPVHSVLWLILAFLSAAGLFVLQGAEFVAMLLVVVYVGAVAVLFLFVVMMLDVDFAELKGELARYLPLALVIGVVLLAQLGIAFSGWTPSDQAESLRAAPVDAAVENTLGLGLVLYDRYVLMFQLAGLVLLVAMIGAIVLTMRHRKDVKRQNVLEQMWRDPAKTMELKDVKPGQGL</sequence>
<reference key="1">
    <citation type="journal article" date="1993" name="Biochemistry">
        <title>DNA sequencing of the seven remaining structural genes of the gene cluster encoding the energy-transducing NADH-quinone oxidoreductase of Paracoccus denitrificans.</title>
        <authorList>
            <person name="Xu X."/>
            <person name="Matsuno-Yagi A."/>
            <person name="Yagi T."/>
        </authorList>
    </citation>
    <scope>NUCLEOTIDE SEQUENCE [GENOMIC DNA]</scope>
    <source>
        <strain>ATCC 13543 / NRRL B-3784 / NRC 449</strain>
    </source>
</reference>
<gene>
    <name evidence="2" type="primary">nqo10</name>
</gene>
<protein>
    <recommendedName>
        <fullName>NADH-quinone oxidoreductase chain 10</fullName>
        <ecNumber>7.1.1.-</ecNumber>
    </recommendedName>
    <alternativeName>
        <fullName>NADH dehydrogenase I, chain 10</fullName>
    </alternativeName>
    <alternativeName>
        <fullName>NDH-1, chain 10</fullName>
    </alternativeName>
</protein>
<feature type="chain" id="PRO_0000118368" description="NADH-quinone oxidoreductase chain 10">
    <location>
        <begin position="1"/>
        <end position="200"/>
    </location>
</feature>
<feature type="transmembrane region" description="Helical" evidence="1">
    <location>
        <begin position="2"/>
        <end position="22"/>
    </location>
</feature>
<feature type="transmembrane region" description="Helical" evidence="1">
    <location>
        <begin position="26"/>
        <end position="46"/>
    </location>
</feature>
<feature type="transmembrane region" description="Helical" evidence="1">
    <location>
        <begin position="51"/>
        <end position="71"/>
    </location>
</feature>
<feature type="transmembrane region" description="Helical" evidence="1">
    <location>
        <begin position="90"/>
        <end position="110"/>
    </location>
</feature>
<feature type="transmembrane region" description="Helical" evidence="1">
    <location>
        <begin position="144"/>
        <end position="164"/>
    </location>
</feature>
<evidence type="ECO:0000255" key="1"/>
<evidence type="ECO:0000303" key="2">
    <source>
    </source>
</evidence>
<evidence type="ECO:0000305" key="3"/>
<comment type="function">
    <text>NDH-1 shuttles electrons from NADH, via FMN and iron-sulfur (Fe-S) centers, to quinones in the respiratory chain. The immediate electron acceptor for the enzyme in this species is believed to be ubiquinone. Couples the redox reaction to proton translocation (for every two electrons transferred, four hydrogen ions are translocated across the cytoplasmic membrane), and thus conserves the redox energy in a proton gradient.</text>
</comment>
<comment type="catalytic activity">
    <reaction>
        <text>a quinone + NADH + 5 H(+)(in) = a quinol + NAD(+) + 4 H(+)(out)</text>
        <dbReference type="Rhea" id="RHEA:57888"/>
        <dbReference type="ChEBI" id="CHEBI:15378"/>
        <dbReference type="ChEBI" id="CHEBI:24646"/>
        <dbReference type="ChEBI" id="CHEBI:57540"/>
        <dbReference type="ChEBI" id="CHEBI:57945"/>
        <dbReference type="ChEBI" id="CHEBI:132124"/>
    </reaction>
</comment>
<comment type="subunit">
    <text>NDH-1 is composed of at least 14 different subunits, Nqo1 to Nqo14. The complex has a L-shaped structure, with the hydrophobic arm (subunits Nqo7, Nqo8, Nqo10 to Nqo14) embedded in the inner membrane and the hydrophilic peripheral arm (subunits Nqo1 to Nqo6, Nqo9) protruding into the bacterial cytoplasm. The hydrophilic domain contains all the redox centers.</text>
</comment>
<comment type="subcellular location">
    <subcellularLocation>
        <location>Cell inner membrane</location>
        <topology>Multi-pass membrane protein</topology>
    </subcellularLocation>
</comment>
<comment type="similarity">
    <text evidence="3">Belongs to the complex I subunit 6 family.</text>
</comment>
<name>NQO10_PARDE</name>
<dbReference type="EC" id="7.1.1.-"/>
<dbReference type="EMBL" id="L02354">
    <property type="protein sequence ID" value="AAA25596.1"/>
    <property type="molecule type" value="Genomic_DNA"/>
</dbReference>
<dbReference type="PIR" id="F45456">
    <property type="entry name" value="F45456"/>
</dbReference>
<dbReference type="RefSeq" id="WP_041529947.1">
    <property type="nucleotide sequence ID" value="NZ_PPGA01000003.1"/>
</dbReference>
<dbReference type="PDB" id="8QBY">
    <property type="method" value="EM"/>
    <property type="resolution" value="2.30 A"/>
    <property type="chains" value="J=1-200"/>
</dbReference>
<dbReference type="PDBsum" id="8QBY"/>
<dbReference type="EMDB" id="EMD-18324"/>
<dbReference type="SMR" id="P29922"/>
<dbReference type="TCDB" id="3.D.1.2.1">
    <property type="family name" value="the h+ or na+-translocating nadh dehydrogenase (ndh) family"/>
</dbReference>
<dbReference type="GO" id="GO:0005886">
    <property type="term" value="C:plasma membrane"/>
    <property type="evidence" value="ECO:0007669"/>
    <property type="project" value="UniProtKB-SubCell"/>
</dbReference>
<dbReference type="GO" id="GO:0008137">
    <property type="term" value="F:NADH dehydrogenase (ubiquinone) activity"/>
    <property type="evidence" value="ECO:0007669"/>
    <property type="project" value="InterPro"/>
</dbReference>
<dbReference type="GO" id="GO:0048038">
    <property type="term" value="F:quinone binding"/>
    <property type="evidence" value="ECO:0007669"/>
    <property type="project" value="UniProtKB-KW"/>
</dbReference>
<dbReference type="Gene3D" id="1.20.120.1200">
    <property type="entry name" value="NADH-ubiquinone/plastoquinone oxidoreductase chain 6, subunit NuoJ"/>
    <property type="match status" value="1"/>
</dbReference>
<dbReference type="InterPro" id="IPR001457">
    <property type="entry name" value="NADH_UbQ/plastoQ_OxRdtase_su6"/>
</dbReference>
<dbReference type="InterPro" id="IPR042106">
    <property type="entry name" value="Nuo/plastoQ_OxRdtase_6_NuoJ"/>
</dbReference>
<dbReference type="NCBIfam" id="NF005164">
    <property type="entry name" value="PRK06638.1-4"/>
    <property type="match status" value="1"/>
</dbReference>
<dbReference type="PANTHER" id="PTHR33269">
    <property type="entry name" value="NADH-UBIQUINONE OXIDOREDUCTASE CHAIN 6"/>
    <property type="match status" value="1"/>
</dbReference>
<dbReference type="PANTHER" id="PTHR33269:SF17">
    <property type="entry name" value="NADH-UBIQUINONE OXIDOREDUCTASE CHAIN 6"/>
    <property type="match status" value="1"/>
</dbReference>
<dbReference type="Pfam" id="PF00499">
    <property type="entry name" value="Oxidored_q3"/>
    <property type="match status" value="1"/>
</dbReference>
<keyword id="KW-0002">3D-structure</keyword>
<keyword id="KW-0997">Cell inner membrane</keyword>
<keyword id="KW-1003">Cell membrane</keyword>
<keyword id="KW-0472">Membrane</keyword>
<keyword id="KW-0520">NAD</keyword>
<keyword id="KW-0874">Quinone</keyword>
<keyword id="KW-1278">Translocase</keyword>
<keyword id="KW-0812">Transmembrane</keyword>
<keyword id="KW-1133">Transmembrane helix</keyword>
<keyword id="KW-0830">Ubiquinone</keyword>